<reference key="1">
    <citation type="journal article" date="2002" name="J. Bacteriol.">
        <title>The superantigen gene ypm is located in an unstable chromosomal locus of Yersinia pseudotuberculosis.</title>
        <authorList>
            <person name="Carnoy C."/>
            <person name="Floquet S."/>
            <person name="Marceau M."/>
            <person name="Sebbane F."/>
            <person name="Haentjens-Herwegh S."/>
            <person name="Devalckenaere A."/>
            <person name="Simonet M."/>
        </authorList>
    </citation>
    <scope>NUCLEOTIDE SEQUENCE [GENOMIC DNA]</scope>
    <source>
        <strain>487/90 / Serotype 6</strain>
        <strain>9314/74 / Serotype I</strain>
        <strain>AH / Serotype 4b</strain>
        <strain>YPT1 / Serotype 3</strain>
    </source>
</reference>
<reference key="2">
    <citation type="journal article" date="2004" name="Proc. Natl. Acad. Sci. U.S.A.">
        <title>Insights into the evolution of Yersinia pestis through whole-genome comparison with Yersinia pseudotuberculosis.</title>
        <authorList>
            <person name="Chain P.S.G."/>
            <person name="Carniel E."/>
            <person name="Larimer F.W."/>
            <person name="Lamerdin J."/>
            <person name="Stoutland P.O."/>
            <person name="Regala W.M."/>
            <person name="Georgescu A.M."/>
            <person name="Vergez L.M."/>
            <person name="Land M.L."/>
            <person name="Motin V.L."/>
            <person name="Brubaker R.R."/>
            <person name="Fowler J."/>
            <person name="Hinnebusch J."/>
            <person name="Marceau M."/>
            <person name="Medigue C."/>
            <person name="Simonet M."/>
            <person name="Chenal-Francisque V."/>
            <person name="Souza B."/>
            <person name="Dacheux D."/>
            <person name="Elliott J.M."/>
            <person name="Derbise A."/>
            <person name="Hauser L.J."/>
            <person name="Garcia E."/>
        </authorList>
    </citation>
    <scope>NUCLEOTIDE SEQUENCE [LARGE SCALE GENOMIC DNA]</scope>
    <source>
        <strain>IP32953</strain>
    </source>
</reference>
<accession>Q933A4</accession>
<accession>Q66AD6</accession>
<accession>Q93AP0</accession>
<accession>Q93C58</accession>
<organism>
    <name type="scientific">Yersinia pseudotuberculosis serotype I (strain IP32953)</name>
    <dbReference type="NCBI Taxonomy" id="273123"/>
    <lineage>
        <taxon>Bacteria</taxon>
        <taxon>Pseudomonadati</taxon>
        <taxon>Pseudomonadota</taxon>
        <taxon>Gammaproteobacteria</taxon>
        <taxon>Enterobacterales</taxon>
        <taxon>Yersiniaceae</taxon>
        <taxon>Yersinia</taxon>
    </lineage>
</organism>
<keyword id="KW-0732">Signal</keyword>
<feature type="signal peptide" evidence="1">
    <location>
        <begin position="1"/>
        <end position="32"/>
    </location>
</feature>
<feature type="chain" id="PRO_0000300234" description="UPF0482 protein YPTB2194">
    <location>
        <begin position="33"/>
        <end position="124"/>
    </location>
</feature>
<feature type="region of interest" description="Disordered" evidence="2">
    <location>
        <begin position="47"/>
        <end position="68"/>
    </location>
</feature>
<feature type="sequence variant" description="In strain: 487/90 / Serotype 6.">
    <original>I</original>
    <variation>M</variation>
    <location>
        <position position="11"/>
    </location>
</feature>
<feature type="sequence variant" description="In strain: 487/90 / Serotype 6 and YPT1 /Serotype 3.">
    <original>T</original>
    <variation>A</variation>
    <location>
        <position position="13"/>
    </location>
</feature>
<feature type="sequence variant" description="In strain: 487/90 / Serotype 6.">
    <original>M</original>
    <variation>I</variation>
    <location>
        <position position="21"/>
    </location>
</feature>
<proteinExistence type="inferred from homology"/>
<protein>
    <recommendedName>
        <fullName evidence="1">UPF0482 protein YPTB2194</fullName>
    </recommendedName>
</protein>
<name>Y2194_YERPS</name>
<dbReference type="EMBL" id="AF335466">
    <property type="protein sequence ID" value="AAK94750.1"/>
    <property type="molecule type" value="Genomic_DNA"/>
</dbReference>
<dbReference type="EMBL" id="AF414083">
    <property type="protein sequence ID" value="AAL02237.1"/>
    <property type="molecule type" value="Genomic_DNA"/>
</dbReference>
<dbReference type="EMBL" id="AF418982">
    <property type="protein sequence ID" value="AAL14972.1"/>
    <property type="molecule type" value="Genomic_DNA"/>
</dbReference>
<dbReference type="EMBL" id="AF425233">
    <property type="protein sequence ID" value="AAL23946.1"/>
    <property type="molecule type" value="Genomic_DNA"/>
</dbReference>
<dbReference type="EMBL" id="BX936398">
    <property type="protein sequence ID" value="CAH21432.1"/>
    <property type="molecule type" value="Genomic_DNA"/>
</dbReference>
<dbReference type="SMR" id="Q933A4"/>
<dbReference type="KEGG" id="yps:YPTB2194"/>
<dbReference type="Proteomes" id="UP000001011">
    <property type="component" value="Chromosome"/>
</dbReference>
<dbReference type="HAMAP" id="MF_01581">
    <property type="entry name" value="UPF0482"/>
    <property type="match status" value="1"/>
</dbReference>
<dbReference type="InterPro" id="IPR009700">
    <property type="entry name" value="DUF1283"/>
</dbReference>
<dbReference type="NCBIfam" id="NF010180">
    <property type="entry name" value="PRK13659.1"/>
    <property type="match status" value="1"/>
</dbReference>
<dbReference type="Pfam" id="PF06932">
    <property type="entry name" value="DUF1283"/>
    <property type="match status" value="1"/>
</dbReference>
<evidence type="ECO:0000255" key="1">
    <source>
        <dbReference type="HAMAP-Rule" id="MF_01581"/>
    </source>
</evidence>
<evidence type="ECO:0000256" key="2">
    <source>
        <dbReference type="SAM" id="MobiDB-lite"/>
    </source>
</evidence>
<sequence>MMKINNLPRLIRTFLPATLLMLPLVWQTPALAQSASCTQGSTCVSVGGNNDPMSKEQARQSQQQWDETNRLRNKMNNRVEKDFDKNDRAVDAKDNCERSDNLNAYWEPNTQRCLDRLSGRKINP</sequence>
<gene>
    <name type="ordered locus">YPTB2194</name>
</gene>
<comment type="similarity">
    <text evidence="1">Belongs to the UPF0482 family.</text>
</comment>